<accession>B2UQL7</accession>
<comment type="function">
    <text evidence="1">Glycosidase.</text>
</comment>
<comment type="cofactor">
    <cofactor evidence="1">
        <name>NAD(+)</name>
        <dbReference type="ChEBI" id="CHEBI:57540"/>
    </cofactor>
    <text evidence="1">Binds 1 NAD(+) per subunit. The NAD(+) cannot dissociate.</text>
</comment>
<comment type="PTM">
    <text>Predicted to be exported by the Tat system. The position of the signal peptide cleavage has not been experimentally proven.</text>
</comment>
<comment type="similarity">
    <text evidence="3">Belongs to the Gfo/Idh/MocA family. Glycosyl hydrolase 109 subfamily.</text>
</comment>
<proteinExistence type="evidence at protein level"/>
<feature type="signal peptide" description="Tat-type signal" evidence="2">
    <location>
        <begin position="1"/>
        <end position="31"/>
    </location>
</feature>
<feature type="chain" id="PRO_5000370607" description="Glycosyl hydrolase family 109 protein 2">
    <location>
        <begin position="32"/>
        <end position="473"/>
    </location>
</feature>
<feature type="binding site" evidence="1">
    <location>
        <begin position="77"/>
        <end position="78"/>
    </location>
    <ligand>
        <name>NAD(+)</name>
        <dbReference type="ChEBI" id="CHEBI:57540"/>
    </ligand>
</feature>
<feature type="binding site" evidence="1">
    <location>
        <position position="99"/>
    </location>
    <ligand>
        <name>NAD(+)</name>
        <dbReference type="ChEBI" id="CHEBI:57540"/>
    </ligand>
</feature>
<feature type="binding site" evidence="1">
    <location>
        <begin position="148"/>
        <end position="151"/>
    </location>
    <ligand>
        <name>NAD(+)</name>
        <dbReference type="ChEBI" id="CHEBI:57540"/>
    </ligand>
</feature>
<feature type="binding site" evidence="1">
    <location>
        <begin position="168"/>
        <end position="169"/>
    </location>
    <ligand>
        <name>NAD(+)</name>
        <dbReference type="ChEBI" id="CHEBI:57540"/>
    </ligand>
</feature>
<feature type="binding site" evidence="1">
    <location>
        <position position="197"/>
    </location>
    <ligand>
        <name>NAD(+)</name>
        <dbReference type="ChEBI" id="CHEBI:57540"/>
    </ligand>
</feature>
<feature type="binding site" evidence="1">
    <location>
        <position position="226"/>
    </location>
    <ligand>
        <name>substrate</name>
    </ligand>
</feature>
<feature type="binding site" evidence="1">
    <location>
        <position position="244"/>
    </location>
    <ligand>
        <name>substrate</name>
    </ligand>
</feature>
<feature type="binding site" evidence="1">
    <location>
        <begin position="256"/>
        <end position="259"/>
    </location>
    <ligand>
        <name>substrate</name>
    </ligand>
</feature>
<feature type="binding site" evidence="1">
    <location>
        <position position="256"/>
    </location>
    <ligand>
        <name>NAD(+)</name>
        <dbReference type="ChEBI" id="CHEBI:57540"/>
    </ligand>
</feature>
<feature type="binding site" evidence="1">
    <location>
        <position position="339"/>
    </location>
    <ligand>
        <name>substrate</name>
    </ligand>
</feature>
<feature type="helix" evidence="4">
    <location>
        <begin position="38"/>
        <end position="41"/>
    </location>
</feature>
<feature type="strand" evidence="4">
    <location>
        <begin position="66"/>
        <end position="73"/>
    </location>
</feature>
<feature type="helix" evidence="4">
    <location>
        <begin position="77"/>
        <end position="86"/>
    </location>
</feature>
<feature type="strand" evidence="4">
    <location>
        <begin position="92"/>
        <end position="98"/>
    </location>
</feature>
<feature type="helix" evidence="4">
    <location>
        <begin position="102"/>
        <end position="116"/>
    </location>
</feature>
<feature type="strand" evidence="4">
    <location>
        <begin position="121"/>
        <end position="123"/>
    </location>
</feature>
<feature type="helix" evidence="4">
    <location>
        <begin position="129"/>
        <end position="137"/>
    </location>
</feature>
<feature type="strand" evidence="4">
    <location>
        <begin position="140"/>
        <end position="144"/>
    </location>
</feature>
<feature type="helix" evidence="4">
    <location>
        <begin position="148"/>
        <end position="150"/>
    </location>
</feature>
<feature type="helix" evidence="4">
    <location>
        <begin position="151"/>
        <end position="160"/>
    </location>
</feature>
<feature type="strand" evidence="4">
    <location>
        <begin position="164"/>
        <end position="167"/>
    </location>
</feature>
<feature type="strand" evidence="4">
    <location>
        <begin position="169"/>
        <end position="171"/>
    </location>
</feature>
<feature type="helix" evidence="4">
    <location>
        <begin position="175"/>
        <end position="188"/>
    </location>
</feature>
<feature type="strand" evidence="4">
    <location>
        <begin position="192"/>
        <end position="194"/>
    </location>
</feature>
<feature type="helix" evidence="4">
    <location>
        <begin position="197"/>
        <end position="200"/>
    </location>
</feature>
<feature type="helix" evidence="4">
    <location>
        <begin position="202"/>
        <end position="212"/>
    </location>
</feature>
<feature type="turn" evidence="4">
    <location>
        <begin position="213"/>
        <end position="216"/>
    </location>
</feature>
<feature type="strand" evidence="4">
    <location>
        <begin position="218"/>
        <end position="227"/>
    </location>
</feature>
<feature type="helix" evidence="4">
    <location>
        <begin position="231"/>
        <end position="235"/>
    </location>
</feature>
<feature type="helix" evidence="4">
    <location>
        <begin position="239"/>
        <end position="242"/>
    </location>
</feature>
<feature type="helix" evidence="4">
    <location>
        <begin position="244"/>
        <end position="248"/>
    </location>
</feature>
<feature type="helix" evidence="4">
    <location>
        <begin position="258"/>
        <end position="267"/>
    </location>
</feature>
<feature type="strand" evidence="4">
    <location>
        <begin position="272"/>
        <end position="275"/>
    </location>
</feature>
<feature type="strand" evidence="4">
    <location>
        <begin position="277"/>
        <end position="284"/>
    </location>
</feature>
<feature type="helix" evidence="4">
    <location>
        <begin position="289"/>
        <end position="297"/>
    </location>
</feature>
<feature type="helix" evidence="4">
    <location>
        <begin position="303"/>
        <end position="305"/>
    </location>
</feature>
<feature type="strand" evidence="4">
    <location>
        <begin position="313"/>
        <end position="321"/>
    </location>
</feature>
<feature type="strand" evidence="4">
    <location>
        <begin position="326"/>
        <end position="337"/>
    </location>
</feature>
<feature type="strand" evidence="4">
    <location>
        <begin position="344"/>
        <end position="347"/>
    </location>
</feature>
<feature type="strand" evidence="4">
    <location>
        <begin position="350"/>
        <end position="353"/>
    </location>
</feature>
<feature type="turn" evidence="4">
    <location>
        <begin position="354"/>
        <end position="357"/>
    </location>
</feature>
<feature type="strand" evidence="4">
    <location>
        <begin position="358"/>
        <end position="361"/>
    </location>
</feature>
<feature type="helix" evidence="4">
    <location>
        <begin position="375"/>
        <end position="386"/>
    </location>
</feature>
<feature type="helix" evidence="4">
    <location>
        <begin position="389"/>
        <end position="401"/>
    </location>
</feature>
<feature type="helix" evidence="4">
    <location>
        <begin position="404"/>
        <end position="406"/>
    </location>
</feature>
<feature type="helix" evidence="4">
    <location>
        <begin position="407"/>
        <end position="421"/>
    </location>
</feature>
<feature type="helix" evidence="4">
    <location>
        <begin position="429"/>
        <end position="436"/>
    </location>
</feature>
<feature type="helix" evidence="4">
    <location>
        <begin position="438"/>
        <end position="447"/>
    </location>
</feature>
<feature type="turn" evidence="4">
    <location>
        <begin position="448"/>
        <end position="450"/>
    </location>
</feature>
<feature type="turn" evidence="4">
    <location>
        <begin position="458"/>
        <end position="461"/>
    </location>
</feature>
<feature type="helix" evidence="4">
    <location>
        <begin position="462"/>
        <end position="465"/>
    </location>
</feature>
<dbReference type="EC" id="3.2.1.-"/>
<dbReference type="EMBL" id="CP001071">
    <property type="protein sequence ID" value="ACD04752.1"/>
    <property type="molecule type" value="Genomic_DNA"/>
</dbReference>
<dbReference type="RefSeq" id="WP_012419967.1">
    <property type="nucleotide sequence ID" value="NZ_CP071807.1"/>
</dbReference>
<dbReference type="PDB" id="6T2B">
    <property type="method" value="X-ray"/>
    <property type="resolution" value="2.13 A"/>
    <property type="chains" value="A/B/C/D=27-473"/>
</dbReference>
<dbReference type="PDBsum" id="6T2B"/>
<dbReference type="SMR" id="B2UQL7"/>
<dbReference type="STRING" id="349741.Amuc_0920"/>
<dbReference type="CAZy" id="GH109">
    <property type="family name" value="Glycoside Hydrolase Family 109"/>
</dbReference>
<dbReference type="PaxDb" id="349741-Amuc_0920"/>
<dbReference type="KEGG" id="amu:Amuc_0920"/>
<dbReference type="eggNOG" id="COG0673">
    <property type="taxonomic scope" value="Bacteria"/>
</dbReference>
<dbReference type="HOGENOM" id="CLU_046965_0_0_0"/>
<dbReference type="OrthoDB" id="9771072at2"/>
<dbReference type="BioCyc" id="AMUC349741:G1GBX-994-MONOMER"/>
<dbReference type="Proteomes" id="UP000001031">
    <property type="component" value="Chromosome"/>
</dbReference>
<dbReference type="GO" id="GO:0016798">
    <property type="term" value="F:hydrolase activity, acting on glycosyl bonds"/>
    <property type="evidence" value="ECO:0007669"/>
    <property type="project" value="UniProtKB-KW"/>
</dbReference>
<dbReference type="GO" id="GO:0000166">
    <property type="term" value="F:nucleotide binding"/>
    <property type="evidence" value="ECO:0007669"/>
    <property type="project" value="InterPro"/>
</dbReference>
<dbReference type="Gene3D" id="3.30.360.10">
    <property type="entry name" value="Dihydrodipicolinate Reductase, domain 2"/>
    <property type="match status" value="1"/>
</dbReference>
<dbReference type="Gene3D" id="3.40.50.720">
    <property type="entry name" value="NAD(P)-binding Rossmann-like Domain"/>
    <property type="match status" value="1"/>
</dbReference>
<dbReference type="InterPro" id="IPR000683">
    <property type="entry name" value="Gfo/Idh/MocA-like_OxRdtase_N"/>
</dbReference>
<dbReference type="InterPro" id="IPR050463">
    <property type="entry name" value="Gfo/Idh/MocA_oxidrdct_glycsds"/>
</dbReference>
<dbReference type="InterPro" id="IPR049303">
    <property type="entry name" value="Glyco_hydro_109_C"/>
</dbReference>
<dbReference type="InterPro" id="IPR036291">
    <property type="entry name" value="NAD(P)-bd_dom_sf"/>
</dbReference>
<dbReference type="InterPro" id="IPR006311">
    <property type="entry name" value="TAT_signal"/>
</dbReference>
<dbReference type="InterPro" id="IPR019546">
    <property type="entry name" value="TAT_signal_bac_arc"/>
</dbReference>
<dbReference type="NCBIfam" id="TIGR01409">
    <property type="entry name" value="TAT_signal_seq"/>
    <property type="match status" value="1"/>
</dbReference>
<dbReference type="PANTHER" id="PTHR43818">
    <property type="entry name" value="BCDNA.GH03377"/>
    <property type="match status" value="1"/>
</dbReference>
<dbReference type="PANTHER" id="PTHR43818:SF1">
    <property type="entry name" value="GLYCOSYL HYDROLASE FAMILY 109 PROTEIN"/>
    <property type="match status" value="1"/>
</dbReference>
<dbReference type="Pfam" id="PF01408">
    <property type="entry name" value="GFO_IDH_MocA"/>
    <property type="match status" value="1"/>
</dbReference>
<dbReference type="Pfam" id="PF21252">
    <property type="entry name" value="Glyco_hydro_109_C"/>
    <property type="match status" value="1"/>
</dbReference>
<dbReference type="SUPFAM" id="SSF51735">
    <property type="entry name" value="NAD(P)-binding Rossmann-fold domains"/>
    <property type="match status" value="1"/>
</dbReference>
<dbReference type="PROSITE" id="PS51318">
    <property type="entry name" value="TAT"/>
    <property type="match status" value="1"/>
</dbReference>
<organism>
    <name type="scientific">Akkermansia muciniphila (strain ATCC BAA-835 / DSM 22959 / JCM 33894 / BCRC 81048 / CCUG 64013 / CIP 107961 / Muc)</name>
    <dbReference type="NCBI Taxonomy" id="349741"/>
    <lineage>
        <taxon>Bacteria</taxon>
        <taxon>Pseudomonadati</taxon>
        <taxon>Verrucomicrobiota</taxon>
        <taxon>Verrucomicrobiia</taxon>
        <taxon>Verrucomicrobiales</taxon>
        <taxon>Akkermansiaceae</taxon>
        <taxon>Akkermansia</taxon>
    </lineage>
</organism>
<reference key="1">
    <citation type="journal article" date="2011" name="PLoS ONE">
        <title>The genome of Akkermansia muciniphila, a dedicated intestinal mucin degrader, and its use in exploring intestinal metagenomes.</title>
        <authorList>
            <person name="van Passel M.W."/>
            <person name="Kant R."/>
            <person name="Zoetendal E.G."/>
            <person name="Plugge C.M."/>
            <person name="Derrien M."/>
            <person name="Malfatti S.A."/>
            <person name="Chain P.S."/>
            <person name="Woyke T."/>
            <person name="Palva A."/>
            <person name="de Vos W.M."/>
            <person name="Smidt H."/>
        </authorList>
    </citation>
    <scope>NUCLEOTIDE SEQUENCE [LARGE SCALE GENOMIC DNA]</scope>
    <source>
        <strain>ATCC BAA-835 / DSM 22959 / JCM 33894 / BCRC 81048 / CCUG 64013 / CIP 107961 / Muc</strain>
    </source>
</reference>
<keyword id="KW-0002">3D-structure</keyword>
<keyword id="KW-0326">Glycosidase</keyword>
<keyword id="KW-0378">Hydrolase</keyword>
<keyword id="KW-0520">NAD</keyword>
<keyword id="KW-1185">Reference proteome</keyword>
<keyword id="KW-0732">Signal</keyword>
<protein>
    <recommendedName>
        <fullName>Glycosyl hydrolase family 109 protein 2</fullName>
        <ecNumber>3.2.1.-</ecNumber>
    </recommendedName>
</protein>
<evidence type="ECO:0000250" key="1"/>
<evidence type="ECO:0000255" key="2">
    <source>
        <dbReference type="PROSITE-ProRule" id="PRU00648"/>
    </source>
</evidence>
<evidence type="ECO:0000305" key="3"/>
<evidence type="ECO:0007829" key="4">
    <source>
        <dbReference type="PDB" id="6T2B"/>
    </source>
</evidence>
<name>G1092_AKKM8</name>
<gene>
    <name type="ordered locus">Amuc_0920</name>
</gene>
<sequence length="473" mass="51825">MSIFSSRRQFLKSLGLAAGAAAAGNALPGKAVEIPAGDHLWKSASPAAPRPSGSTYMGGFKAPRLGRIRLAFIGVGGRGFSHLAQMCVMDGVEIVGICDLKEELTKRGVDRVLSRMGKSPLGYSGGDMEYLTMLKELKPDAVIISTDWSSHARIACDSMKHGAHAFVEVPLAVSLEELWSLVDTSEATRKHCMMMENVNYGRDELMFLNMVRQGVIGDLLHGEAAYIHCLVTQLGDTRGEGAWRPEYHTRINGNLYPTHGLGPVAQYMNLERGEDRFCRVAAFASPALGRNAYAKKHLPADHRWNNTPFICGDMNTAVVKTQLGRTILVQLDETSPRPYSRANLIQGTEGTLAGFPTRVAGEKLGNGNYHEWIEGREKLAAIYEKYDHPLWKRIGELATKMGGHGGMDFVMLSRIVECLRNGEPMDQNVYEGASWSSLLPLTARSIAQGGMPVEFPDFTRGDWKTTMPLAVVS</sequence>